<reference key="1">
    <citation type="journal article" date="1996" name="DNA Res.">
        <title>Sequence analysis of the genome of the unicellular cyanobacterium Synechocystis sp. strain PCC6803. II. Sequence determination of the entire genome and assignment of potential protein-coding regions.</title>
        <authorList>
            <person name="Kaneko T."/>
            <person name="Sato S."/>
            <person name="Kotani H."/>
            <person name="Tanaka A."/>
            <person name="Asamizu E."/>
            <person name="Nakamura Y."/>
            <person name="Miyajima N."/>
            <person name="Hirosawa M."/>
            <person name="Sugiura M."/>
            <person name="Sasamoto S."/>
            <person name="Kimura T."/>
            <person name="Hosouchi T."/>
            <person name="Matsuno A."/>
            <person name="Muraki A."/>
            <person name="Nakazaki N."/>
            <person name="Naruo K."/>
            <person name="Okumura S."/>
            <person name="Shimpo S."/>
            <person name="Takeuchi C."/>
            <person name="Wada T."/>
            <person name="Watanabe A."/>
            <person name="Yamada M."/>
            <person name="Yasuda M."/>
            <person name="Tabata S."/>
        </authorList>
    </citation>
    <scope>NUCLEOTIDE SEQUENCE [LARGE SCALE GENOMIC DNA]</scope>
    <source>
        <strain>ATCC 27184 / PCC 6803 / Kazusa</strain>
    </source>
</reference>
<dbReference type="EC" id="2.3.2.6" evidence="1"/>
<dbReference type="EMBL" id="BA000022">
    <property type="protein sequence ID" value="BAA17611.1"/>
    <property type="molecule type" value="Genomic_DNA"/>
</dbReference>
<dbReference type="PIR" id="S77277">
    <property type="entry name" value="S77277"/>
</dbReference>
<dbReference type="SMR" id="P73571"/>
<dbReference type="STRING" id="1148.gene:10498478"/>
<dbReference type="PaxDb" id="1148-1652691"/>
<dbReference type="EnsemblBacteria" id="BAA17611">
    <property type="protein sequence ID" value="BAA17611"/>
    <property type="gene ID" value="BAA17611"/>
</dbReference>
<dbReference type="KEGG" id="syn:sll0869"/>
<dbReference type="eggNOG" id="COG2360">
    <property type="taxonomic scope" value="Bacteria"/>
</dbReference>
<dbReference type="InParanoid" id="P73571"/>
<dbReference type="PhylomeDB" id="P73571"/>
<dbReference type="Proteomes" id="UP000001425">
    <property type="component" value="Chromosome"/>
</dbReference>
<dbReference type="GO" id="GO:0005737">
    <property type="term" value="C:cytoplasm"/>
    <property type="evidence" value="ECO:0000318"/>
    <property type="project" value="GO_Central"/>
</dbReference>
<dbReference type="GO" id="GO:0008914">
    <property type="term" value="F:leucyl-tRNA--protein transferase activity"/>
    <property type="evidence" value="ECO:0000318"/>
    <property type="project" value="GO_Central"/>
</dbReference>
<dbReference type="GO" id="GO:0030163">
    <property type="term" value="P:protein catabolic process"/>
    <property type="evidence" value="ECO:0007669"/>
    <property type="project" value="UniProtKB-UniRule"/>
</dbReference>
<dbReference type="FunFam" id="3.40.630.70:FF:000001">
    <property type="entry name" value="Leucyl/phenylalanyl-tRNA--protein transferase"/>
    <property type="match status" value="1"/>
</dbReference>
<dbReference type="Gene3D" id="3.40.630.70">
    <property type="entry name" value="Leucyl/phenylalanyl-tRNA-protein transferase, C-terminal domain"/>
    <property type="match status" value="1"/>
</dbReference>
<dbReference type="HAMAP" id="MF_00688">
    <property type="entry name" value="Leu_Phe_trans"/>
    <property type="match status" value="1"/>
</dbReference>
<dbReference type="InterPro" id="IPR016181">
    <property type="entry name" value="Acyl_CoA_acyltransferase"/>
</dbReference>
<dbReference type="InterPro" id="IPR004616">
    <property type="entry name" value="Leu/Phe-tRNA_Trfase"/>
</dbReference>
<dbReference type="InterPro" id="IPR042203">
    <property type="entry name" value="Leu/Phe-tRNA_Trfase_C"/>
</dbReference>
<dbReference type="NCBIfam" id="TIGR00667">
    <property type="entry name" value="aat"/>
    <property type="match status" value="1"/>
</dbReference>
<dbReference type="PANTHER" id="PTHR30098">
    <property type="entry name" value="LEUCYL/PHENYLALANYL-TRNA--PROTEIN TRANSFERASE"/>
    <property type="match status" value="1"/>
</dbReference>
<dbReference type="PANTHER" id="PTHR30098:SF2">
    <property type="entry name" value="LEUCYL_PHENYLALANYL-TRNA--PROTEIN TRANSFERASE"/>
    <property type="match status" value="1"/>
</dbReference>
<dbReference type="Pfam" id="PF03588">
    <property type="entry name" value="Leu_Phe_trans"/>
    <property type="match status" value="1"/>
</dbReference>
<dbReference type="SUPFAM" id="SSF55729">
    <property type="entry name" value="Acyl-CoA N-acyltransferases (Nat)"/>
    <property type="match status" value="1"/>
</dbReference>
<protein>
    <recommendedName>
        <fullName evidence="1">Leucyl/phenylalanyl-tRNA--protein transferase</fullName>
        <ecNumber evidence="1">2.3.2.6</ecNumber>
    </recommendedName>
    <alternativeName>
        <fullName evidence="1">L/F-transferase</fullName>
    </alternativeName>
    <alternativeName>
        <fullName evidence="1">Leucyltransferase</fullName>
    </alternativeName>
    <alternativeName>
        <fullName evidence="1">Phenyalanyltransferase</fullName>
    </alternativeName>
</protein>
<organism>
    <name type="scientific">Synechocystis sp. (strain ATCC 27184 / PCC 6803 / Kazusa)</name>
    <dbReference type="NCBI Taxonomy" id="1111708"/>
    <lineage>
        <taxon>Bacteria</taxon>
        <taxon>Bacillati</taxon>
        <taxon>Cyanobacteriota</taxon>
        <taxon>Cyanophyceae</taxon>
        <taxon>Synechococcales</taxon>
        <taxon>Merismopediaceae</taxon>
        <taxon>Synechocystis</taxon>
    </lineage>
</organism>
<name>LFTR_SYNY3</name>
<keyword id="KW-0012">Acyltransferase</keyword>
<keyword id="KW-0963">Cytoplasm</keyword>
<keyword id="KW-1185">Reference proteome</keyword>
<keyword id="KW-0808">Transferase</keyword>
<accession>P73571</accession>
<proteinExistence type="inferred from homology"/>
<gene>
    <name evidence="1" type="primary">aat</name>
    <name type="ordered locus">sll0869</name>
</gene>
<sequence>MKIDVDYAIAQYAQGLFLMADDRHGLGWYSSDRHALIPLDDQFRYPKSLQRVLNQNRFQVKINQAFTAVCEGCAARPETWISQELIEVYHTFHVAGWAHSFETWHGDRLAGGILGIAIRGAFIGESMFYTIPEASKVAMVKLVQHLRQRSYQLFDAQLQNPHLKRFGAYEVEEKAYKKQLEKALNYRCHFTSEPDLYD</sequence>
<evidence type="ECO:0000255" key="1">
    <source>
        <dbReference type="HAMAP-Rule" id="MF_00688"/>
    </source>
</evidence>
<comment type="function">
    <text evidence="1">Functions in the N-end rule pathway of protein degradation where it conjugates Leu, Phe and, less efficiently, Met from aminoacyl-tRNAs to the N-termini of proteins containing an N-terminal arginine or lysine.</text>
</comment>
<comment type="catalytic activity">
    <reaction evidence="1">
        <text>N-terminal L-lysyl-[protein] + L-leucyl-tRNA(Leu) = N-terminal L-leucyl-L-lysyl-[protein] + tRNA(Leu) + H(+)</text>
        <dbReference type="Rhea" id="RHEA:12340"/>
        <dbReference type="Rhea" id="RHEA-COMP:9613"/>
        <dbReference type="Rhea" id="RHEA-COMP:9622"/>
        <dbReference type="Rhea" id="RHEA-COMP:12670"/>
        <dbReference type="Rhea" id="RHEA-COMP:12671"/>
        <dbReference type="ChEBI" id="CHEBI:15378"/>
        <dbReference type="ChEBI" id="CHEBI:65249"/>
        <dbReference type="ChEBI" id="CHEBI:78442"/>
        <dbReference type="ChEBI" id="CHEBI:78494"/>
        <dbReference type="ChEBI" id="CHEBI:133043"/>
        <dbReference type="EC" id="2.3.2.6"/>
    </reaction>
</comment>
<comment type="catalytic activity">
    <reaction evidence="1">
        <text>N-terminal L-arginyl-[protein] + L-leucyl-tRNA(Leu) = N-terminal L-leucyl-L-arginyl-[protein] + tRNA(Leu) + H(+)</text>
        <dbReference type="Rhea" id="RHEA:50416"/>
        <dbReference type="Rhea" id="RHEA-COMP:9613"/>
        <dbReference type="Rhea" id="RHEA-COMP:9622"/>
        <dbReference type="Rhea" id="RHEA-COMP:12672"/>
        <dbReference type="Rhea" id="RHEA-COMP:12673"/>
        <dbReference type="ChEBI" id="CHEBI:15378"/>
        <dbReference type="ChEBI" id="CHEBI:64719"/>
        <dbReference type="ChEBI" id="CHEBI:78442"/>
        <dbReference type="ChEBI" id="CHEBI:78494"/>
        <dbReference type="ChEBI" id="CHEBI:133044"/>
        <dbReference type="EC" id="2.3.2.6"/>
    </reaction>
</comment>
<comment type="catalytic activity">
    <reaction evidence="1">
        <text>L-phenylalanyl-tRNA(Phe) + an N-terminal L-alpha-aminoacyl-[protein] = an N-terminal L-phenylalanyl-L-alpha-aminoacyl-[protein] + tRNA(Phe)</text>
        <dbReference type="Rhea" id="RHEA:43632"/>
        <dbReference type="Rhea" id="RHEA-COMP:9668"/>
        <dbReference type="Rhea" id="RHEA-COMP:9699"/>
        <dbReference type="Rhea" id="RHEA-COMP:10636"/>
        <dbReference type="Rhea" id="RHEA-COMP:10637"/>
        <dbReference type="ChEBI" id="CHEBI:78442"/>
        <dbReference type="ChEBI" id="CHEBI:78531"/>
        <dbReference type="ChEBI" id="CHEBI:78597"/>
        <dbReference type="ChEBI" id="CHEBI:83561"/>
        <dbReference type="EC" id="2.3.2.6"/>
    </reaction>
</comment>
<comment type="subcellular location">
    <subcellularLocation>
        <location evidence="1">Cytoplasm</location>
    </subcellularLocation>
</comment>
<comment type="similarity">
    <text evidence="1">Belongs to the L/F-transferase family.</text>
</comment>
<feature type="chain" id="PRO_0000207246" description="Leucyl/phenylalanyl-tRNA--protein transferase">
    <location>
        <begin position="1"/>
        <end position="198"/>
    </location>
</feature>